<proteinExistence type="evidence at transcript level"/>
<organism>
    <name type="scientific">Arabidopsis thaliana</name>
    <name type="common">Mouse-ear cress</name>
    <dbReference type="NCBI Taxonomy" id="3702"/>
    <lineage>
        <taxon>Eukaryota</taxon>
        <taxon>Viridiplantae</taxon>
        <taxon>Streptophyta</taxon>
        <taxon>Embryophyta</taxon>
        <taxon>Tracheophyta</taxon>
        <taxon>Spermatophyta</taxon>
        <taxon>Magnoliopsida</taxon>
        <taxon>eudicotyledons</taxon>
        <taxon>Gunneridae</taxon>
        <taxon>Pentapetalae</taxon>
        <taxon>rosids</taxon>
        <taxon>malvids</taxon>
        <taxon>Brassicales</taxon>
        <taxon>Brassicaceae</taxon>
        <taxon>Camelineae</taxon>
        <taxon>Arabidopsis</taxon>
    </lineage>
</organism>
<feature type="chain" id="PRO_0000114909" description="Probable ubiquitin receptor RAD23a">
    <location>
        <begin position="1"/>
        <end position="368"/>
    </location>
</feature>
<feature type="domain" description="Ubiquitin-like" evidence="3">
    <location>
        <begin position="1"/>
        <end position="77"/>
    </location>
</feature>
<feature type="domain" description="UBA 1" evidence="2">
    <location>
        <begin position="142"/>
        <end position="185"/>
    </location>
</feature>
<feature type="domain" description="STI1">
    <location>
        <begin position="239"/>
        <end position="282"/>
    </location>
</feature>
<feature type="domain" description="UBA 2" evidence="2">
    <location>
        <begin position="320"/>
        <end position="360"/>
    </location>
</feature>
<feature type="region of interest" description="Disordered" evidence="4">
    <location>
        <begin position="80"/>
        <end position="136"/>
    </location>
</feature>
<feature type="region of interest" description="Disordered" evidence="4">
    <location>
        <begin position="202"/>
        <end position="222"/>
    </location>
</feature>
<feature type="compositionally biased region" description="Low complexity" evidence="4">
    <location>
        <begin position="80"/>
        <end position="111"/>
    </location>
</feature>
<feature type="compositionally biased region" description="Polar residues" evidence="4">
    <location>
        <begin position="116"/>
        <end position="136"/>
    </location>
</feature>
<feature type="splice variant" id="VSP_014979" description="In isoform 2." evidence="8">
    <location>
        <begin position="20"/>
        <end position="21"/>
    </location>
</feature>
<evidence type="ECO:0000250" key="1"/>
<evidence type="ECO:0000255" key="2">
    <source>
        <dbReference type="PROSITE-ProRule" id="PRU00212"/>
    </source>
</evidence>
<evidence type="ECO:0000255" key="3">
    <source>
        <dbReference type="PROSITE-ProRule" id="PRU00214"/>
    </source>
</evidence>
<evidence type="ECO:0000256" key="4">
    <source>
        <dbReference type="SAM" id="MobiDB-lite"/>
    </source>
</evidence>
<evidence type="ECO:0000269" key="5">
    <source>
    </source>
</evidence>
<evidence type="ECO:0000269" key="6">
    <source>
    </source>
</evidence>
<evidence type="ECO:0000303" key="7">
    <source>
    </source>
</evidence>
<evidence type="ECO:0000303" key="8">
    <source ref="1"/>
</evidence>
<evidence type="ECO:0000305" key="9"/>
<dbReference type="EMBL" id="AB109195">
    <property type="protein sequence ID" value="BAC76391.1"/>
    <property type="molecule type" value="mRNA"/>
</dbReference>
<dbReference type="EMBL" id="AC006341">
    <property type="protein sequence ID" value="AAD34676.1"/>
    <property type="status" value="ALT_SEQ"/>
    <property type="molecule type" value="Genomic_DNA"/>
</dbReference>
<dbReference type="EMBL" id="AC010924">
    <property type="protein sequence ID" value="AAF18513.1"/>
    <property type="status" value="ALT_SEQ"/>
    <property type="molecule type" value="Genomic_DNA"/>
</dbReference>
<dbReference type="EMBL" id="CP002684">
    <property type="protein sequence ID" value="AEE29418.1"/>
    <property type="molecule type" value="Genomic_DNA"/>
</dbReference>
<dbReference type="PIR" id="G86296">
    <property type="entry name" value="G86296"/>
</dbReference>
<dbReference type="PIR" id="H86296">
    <property type="entry name" value="H86296"/>
</dbReference>
<dbReference type="RefSeq" id="NP_173070.1">
    <molecule id="Q84L32-1"/>
    <property type="nucleotide sequence ID" value="NM_101486.3"/>
</dbReference>
<dbReference type="SMR" id="Q84L32"/>
<dbReference type="FunCoup" id="Q84L32">
    <property type="interactions" value="3976"/>
</dbReference>
<dbReference type="IntAct" id="Q84L32">
    <property type="interactions" value="5"/>
</dbReference>
<dbReference type="MINT" id="Q84L32"/>
<dbReference type="STRING" id="3702.Q84L32"/>
<dbReference type="TCDB" id="3.A.16.1.5">
    <property type="family name" value="the endoplasmic reticular retrotranslocon (er-rt) family"/>
</dbReference>
<dbReference type="PaxDb" id="3702-AT1G16190.1"/>
<dbReference type="ProteomicsDB" id="236540">
    <molecule id="Q84L32-1"/>
</dbReference>
<dbReference type="EnsemblPlants" id="AT1G16190.1">
    <molecule id="Q84L32-1"/>
    <property type="protein sequence ID" value="AT1G16190.1"/>
    <property type="gene ID" value="AT1G16190"/>
</dbReference>
<dbReference type="GeneID" id="838188"/>
<dbReference type="Gramene" id="AT1G16190.1">
    <molecule id="Q84L32-1"/>
    <property type="protein sequence ID" value="AT1G16190.1"/>
    <property type="gene ID" value="AT1G16190"/>
</dbReference>
<dbReference type="KEGG" id="ath:AT1G16190"/>
<dbReference type="Araport" id="AT1G16190"/>
<dbReference type="TAIR" id="AT1G16190">
    <property type="gene designation" value="RAD23A"/>
</dbReference>
<dbReference type="eggNOG" id="KOG0011">
    <property type="taxonomic scope" value="Eukaryota"/>
</dbReference>
<dbReference type="HOGENOM" id="CLU_040364_1_0_1"/>
<dbReference type="InParanoid" id="Q84L32"/>
<dbReference type="OrthoDB" id="419317at2759"/>
<dbReference type="PhylomeDB" id="Q84L32"/>
<dbReference type="PRO" id="PR:Q84L32"/>
<dbReference type="Proteomes" id="UP000006548">
    <property type="component" value="Chromosome 1"/>
</dbReference>
<dbReference type="ExpressionAtlas" id="Q84L32">
    <property type="expression patterns" value="baseline and differential"/>
</dbReference>
<dbReference type="GO" id="GO:0005737">
    <property type="term" value="C:cytoplasm"/>
    <property type="evidence" value="ECO:0000314"/>
    <property type="project" value="UniProtKB"/>
</dbReference>
<dbReference type="GO" id="GO:0005634">
    <property type="term" value="C:nucleus"/>
    <property type="evidence" value="ECO:0000314"/>
    <property type="project" value="TAIR"/>
</dbReference>
<dbReference type="GO" id="GO:0003684">
    <property type="term" value="F:damaged DNA binding"/>
    <property type="evidence" value="ECO:0007669"/>
    <property type="project" value="InterPro"/>
</dbReference>
<dbReference type="GO" id="GO:0031593">
    <property type="term" value="F:polyubiquitin modification-dependent protein binding"/>
    <property type="evidence" value="ECO:0000314"/>
    <property type="project" value="UniProtKB"/>
</dbReference>
<dbReference type="GO" id="GO:0070628">
    <property type="term" value="F:proteasome binding"/>
    <property type="evidence" value="ECO:0000314"/>
    <property type="project" value="TAIR"/>
</dbReference>
<dbReference type="GO" id="GO:0043130">
    <property type="term" value="F:ubiquitin binding"/>
    <property type="evidence" value="ECO:0000314"/>
    <property type="project" value="TAIR"/>
</dbReference>
<dbReference type="GO" id="GO:0006289">
    <property type="term" value="P:nucleotide-excision repair"/>
    <property type="evidence" value="ECO:0007669"/>
    <property type="project" value="InterPro"/>
</dbReference>
<dbReference type="GO" id="GO:0043161">
    <property type="term" value="P:proteasome-mediated ubiquitin-dependent protein catabolic process"/>
    <property type="evidence" value="ECO:0007669"/>
    <property type="project" value="InterPro"/>
</dbReference>
<dbReference type="GO" id="GO:0009411">
    <property type="term" value="P:response to UV"/>
    <property type="evidence" value="ECO:0000315"/>
    <property type="project" value="UniProtKB"/>
</dbReference>
<dbReference type="GO" id="GO:0009650">
    <property type="term" value="P:UV protection"/>
    <property type="evidence" value="ECO:0000315"/>
    <property type="project" value="UniProtKB"/>
</dbReference>
<dbReference type="CDD" id="cd14379">
    <property type="entry name" value="UBA1_Rad23_plant"/>
    <property type="match status" value="1"/>
</dbReference>
<dbReference type="CDD" id="cd14382">
    <property type="entry name" value="UBA2_RAD23_plant"/>
    <property type="match status" value="1"/>
</dbReference>
<dbReference type="CDD" id="cd01805">
    <property type="entry name" value="Ubl_Rad23"/>
    <property type="match status" value="1"/>
</dbReference>
<dbReference type="FunFam" id="3.10.20.90:FF:000069">
    <property type="entry name" value="UV excision repair protein RAD23"/>
    <property type="match status" value="1"/>
</dbReference>
<dbReference type="FunFam" id="1.10.10.540:FF:000001">
    <property type="entry name" value="UV excision repair protein RAD23 B"/>
    <property type="match status" value="1"/>
</dbReference>
<dbReference type="FunFam" id="1.10.8.10:FF:000002">
    <property type="entry name" value="UV excision repair protein RAD23 homolog"/>
    <property type="match status" value="1"/>
</dbReference>
<dbReference type="FunFam" id="1.10.8.10:FF:000003">
    <property type="entry name" value="UV excision repair protein RAD23 homolog"/>
    <property type="match status" value="1"/>
</dbReference>
<dbReference type="Gene3D" id="1.10.8.10">
    <property type="entry name" value="DNA helicase RuvA subunit, C-terminal domain"/>
    <property type="match status" value="2"/>
</dbReference>
<dbReference type="Gene3D" id="3.10.20.90">
    <property type="entry name" value="Phosphatidylinositol 3-kinase Catalytic Subunit, Chain A, domain 1"/>
    <property type="match status" value="1"/>
</dbReference>
<dbReference type="Gene3D" id="1.10.10.540">
    <property type="entry name" value="XPC-binding domain"/>
    <property type="match status" value="1"/>
</dbReference>
<dbReference type="InterPro" id="IPR004806">
    <property type="entry name" value="Rad23"/>
</dbReference>
<dbReference type="InterPro" id="IPR006636">
    <property type="entry name" value="STI1_HS-bd"/>
</dbReference>
<dbReference type="InterPro" id="IPR015940">
    <property type="entry name" value="UBA"/>
</dbReference>
<dbReference type="InterPro" id="IPR009060">
    <property type="entry name" value="UBA-like_sf"/>
</dbReference>
<dbReference type="InterPro" id="IPR000626">
    <property type="entry name" value="Ubiquitin-like_dom"/>
</dbReference>
<dbReference type="InterPro" id="IPR029071">
    <property type="entry name" value="Ubiquitin-like_domsf"/>
</dbReference>
<dbReference type="InterPro" id="IPR015360">
    <property type="entry name" value="XPC-bd"/>
</dbReference>
<dbReference type="InterPro" id="IPR036353">
    <property type="entry name" value="XPC-bd_sf"/>
</dbReference>
<dbReference type="NCBIfam" id="TIGR00601">
    <property type="entry name" value="rad23"/>
    <property type="match status" value="1"/>
</dbReference>
<dbReference type="PANTHER" id="PTHR10621">
    <property type="entry name" value="UV EXCISION REPAIR PROTEIN RAD23"/>
    <property type="match status" value="1"/>
</dbReference>
<dbReference type="PANTHER" id="PTHR10621:SF0">
    <property type="entry name" value="UV EXCISION REPAIR PROTEIN RAD23"/>
    <property type="match status" value="1"/>
</dbReference>
<dbReference type="Pfam" id="PF00627">
    <property type="entry name" value="UBA"/>
    <property type="match status" value="2"/>
</dbReference>
<dbReference type="Pfam" id="PF00240">
    <property type="entry name" value="ubiquitin"/>
    <property type="match status" value="1"/>
</dbReference>
<dbReference type="Pfam" id="PF09280">
    <property type="entry name" value="XPC-binding"/>
    <property type="match status" value="1"/>
</dbReference>
<dbReference type="PRINTS" id="PR01839">
    <property type="entry name" value="RAD23PROTEIN"/>
</dbReference>
<dbReference type="SMART" id="SM00727">
    <property type="entry name" value="STI1"/>
    <property type="match status" value="1"/>
</dbReference>
<dbReference type="SMART" id="SM00165">
    <property type="entry name" value="UBA"/>
    <property type="match status" value="2"/>
</dbReference>
<dbReference type="SMART" id="SM00213">
    <property type="entry name" value="UBQ"/>
    <property type="match status" value="1"/>
</dbReference>
<dbReference type="SUPFAM" id="SSF46934">
    <property type="entry name" value="UBA-like"/>
    <property type="match status" value="2"/>
</dbReference>
<dbReference type="SUPFAM" id="SSF54236">
    <property type="entry name" value="Ubiquitin-like"/>
    <property type="match status" value="1"/>
</dbReference>
<dbReference type="SUPFAM" id="SSF101238">
    <property type="entry name" value="XPC-binding domain"/>
    <property type="match status" value="1"/>
</dbReference>
<dbReference type="PROSITE" id="PS50030">
    <property type="entry name" value="UBA"/>
    <property type="match status" value="2"/>
</dbReference>
<dbReference type="PROSITE" id="PS50053">
    <property type="entry name" value="UBIQUITIN_2"/>
    <property type="match status" value="1"/>
</dbReference>
<gene>
    <name evidence="7" type="primary">RAD23A</name>
    <name evidence="8" type="synonym">RAD23</name>
    <name evidence="8" type="synonym">RAD23-2</name>
    <name type="ordered locus">At1g16190</name>
    <name type="ORF">F3O9.1</name>
</gene>
<keyword id="KW-0025">Alternative splicing</keyword>
<keyword id="KW-0963">Cytoplasm</keyword>
<keyword id="KW-0227">DNA damage</keyword>
<keyword id="KW-0234">DNA repair</keyword>
<keyword id="KW-0539">Nucleus</keyword>
<keyword id="KW-1185">Reference proteome</keyword>
<keyword id="KW-0677">Repeat</keyword>
<sequence length="368" mass="39842">MKLTVKTLKGSHFEIRVLPTDTIMAVKKNIEDSQSKDNYPCGQQLLIHNGKVLKDETTLVENKVTEEGFLVVMLSKSKTASSAGPSSTQPTSTTTSTISSTTLAAPSTTQSIAVPASNSTPVQEQPTAQSDTYGQAASTLVSGSSIEQMVQQIMEMGGGSWDKETVTRALRAAYNNPERAVDYLYSGIPETVTIPATNLSGVGSGRELTAPPPSGGPNSSPLDLFPQEAVSDAAGGDLGTLEFLRGNDQFQQLRSMVNSNPQILQPMLQELGKQNPQLLRLIQENQAEFLQLLNEPYEGSDGDVDIFDQPDQEMPHSVNVTPEEQESIERLEAMGFDRAIVIEAFLSCDRNEELAANYLLEHSADFED</sequence>
<accession>Q84L32</accession>
<accession>Q9S9L8</accession>
<accession>Q9SA20</accession>
<name>RD23A_ARATH</name>
<protein>
    <recommendedName>
        <fullName evidence="7">Probable ubiquitin receptor RAD23a</fullName>
        <shortName evidence="7">AtRAD23a</shortName>
    </recommendedName>
    <alternativeName>
        <fullName evidence="8">Putative DNA repair protein RAD23-2</fullName>
    </alternativeName>
    <alternativeName>
        <fullName evidence="8">RAD23-like protein 2</fullName>
        <shortName evidence="8">AtRAD23-2</shortName>
    </alternativeName>
</protein>
<comment type="function">
    <text evidence="1 6">May be involved in nucleotide excision repair (By similarity). Binds and presumably selects ubiquitin-conjugates for destruction. Prefers multiubiquitin chains rather than single ubiquitins, with a binding affinity for 'Lys-48'-linked ubiquitin chains. Acts as a ubiquitin receptor that associates with the 26S proteasomal docking subunit RPN10 for the indirect recognition of ubiquitinated substrates of ubiquitin/26S proteasome-mediated proteolysis (UPP) (By similarity). Involved in UV tolerance in roots, specifically in dark conditions (PubMed:29283431).</text>
</comment>
<comment type="subunit">
    <text evidence="1">Interacts with 'Lys-48'-linked polyubiquitin chains. Interacts with RPN10.</text>
</comment>
<comment type="subcellular location">
    <subcellularLocation>
        <location evidence="5">Nucleus</location>
    </subcellularLocation>
    <subcellularLocation>
        <location evidence="5">Cytoplasm</location>
    </subcellularLocation>
</comment>
<comment type="alternative products">
    <event type="alternative splicing"/>
    <isoform>
        <id>Q84L32-1</id>
        <name>1</name>
        <sequence type="displayed"/>
    </isoform>
    <isoform>
        <id>Q84L32-2</id>
        <name>2</name>
        <sequence type="described" ref="VSP_014979"/>
    </isoform>
</comment>
<comment type="tissue specificity">
    <text evidence="5">Widely expressed in the whole plant.</text>
</comment>
<comment type="disruption phenotype">
    <text evidence="6">Increased UV sensitivity in roots, specifically in dark conditions.</text>
</comment>
<comment type="miscellaneous">
    <molecule>Isoform 2</molecule>
    <text evidence="9">May be due to a competing donor splice site.</text>
</comment>
<comment type="similarity">
    <text evidence="9">Belongs to the RAD23 family.</text>
</comment>
<comment type="sequence caution" evidence="9">
    <conflict type="erroneous gene model prediction">
        <sequence resource="EMBL-CDS" id="AAD34676"/>
    </conflict>
</comment>
<comment type="sequence caution" evidence="9">
    <conflict type="erroneous gene model prediction">
        <sequence resource="EMBL-CDS" id="AAF18513"/>
    </conflict>
</comment>
<reference key="1">
    <citation type="submission" date="2003-04" db="EMBL/GenBank/DDBJ databases">
        <title>Isolation of four RAD23 genes from Arabidopsis thaliana and detection of alternative splicing variants.</title>
        <authorList>
            <person name="Ishikawa Y."/>
            <person name="Endo M."/>
            <person name="Abe K."/>
            <person name="Osakabe K."/>
            <person name="Nakajima N."/>
            <person name="Saji H."/>
            <person name="Ito Y."/>
            <person name="Ichikawa H."/>
            <person name="Kameya T."/>
            <person name="Toki S."/>
        </authorList>
    </citation>
    <scope>NUCLEOTIDE SEQUENCE [MRNA] (ISOFORM 2)</scope>
    <source>
        <tissue>Flower bud</tissue>
    </source>
</reference>
<reference key="2">
    <citation type="journal article" date="2000" name="Nature">
        <title>Sequence and analysis of chromosome 1 of the plant Arabidopsis thaliana.</title>
        <authorList>
            <person name="Theologis A."/>
            <person name="Ecker J.R."/>
            <person name="Palm C.J."/>
            <person name="Federspiel N.A."/>
            <person name="Kaul S."/>
            <person name="White O."/>
            <person name="Alonso J."/>
            <person name="Altafi H."/>
            <person name="Araujo R."/>
            <person name="Bowman C.L."/>
            <person name="Brooks S.Y."/>
            <person name="Buehler E."/>
            <person name="Chan A."/>
            <person name="Chao Q."/>
            <person name="Chen H."/>
            <person name="Cheuk R.F."/>
            <person name="Chin C.W."/>
            <person name="Chung M.K."/>
            <person name="Conn L."/>
            <person name="Conway A.B."/>
            <person name="Conway A.R."/>
            <person name="Creasy T.H."/>
            <person name="Dewar K."/>
            <person name="Dunn P."/>
            <person name="Etgu P."/>
            <person name="Feldblyum T.V."/>
            <person name="Feng J.-D."/>
            <person name="Fong B."/>
            <person name="Fujii C.Y."/>
            <person name="Gill J.E."/>
            <person name="Goldsmith A.D."/>
            <person name="Haas B."/>
            <person name="Hansen N.F."/>
            <person name="Hughes B."/>
            <person name="Huizar L."/>
            <person name="Hunter J.L."/>
            <person name="Jenkins J."/>
            <person name="Johnson-Hopson C."/>
            <person name="Khan S."/>
            <person name="Khaykin E."/>
            <person name="Kim C.J."/>
            <person name="Koo H.L."/>
            <person name="Kremenetskaia I."/>
            <person name="Kurtz D.B."/>
            <person name="Kwan A."/>
            <person name="Lam B."/>
            <person name="Langin-Hooper S."/>
            <person name="Lee A."/>
            <person name="Lee J.M."/>
            <person name="Lenz C.A."/>
            <person name="Li J.H."/>
            <person name="Li Y.-P."/>
            <person name="Lin X."/>
            <person name="Liu S.X."/>
            <person name="Liu Z.A."/>
            <person name="Luros J.S."/>
            <person name="Maiti R."/>
            <person name="Marziali A."/>
            <person name="Militscher J."/>
            <person name="Miranda M."/>
            <person name="Nguyen M."/>
            <person name="Nierman W.C."/>
            <person name="Osborne B.I."/>
            <person name="Pai G."/>
            <person name="Peterson J."/>
            <person name="Pham P.K."/>
            <person name="Rizzo M."/>
            <person name="Rooney T."/>
            <person name="Rowley D."/>
            <person name="Sakano H."/>
            <person name="Salzberg S.L."/>
            <person name="Schwartz J.R."/>
            <person name="Shinn P."/>
            <person name="Southwick A.M."/>
            <person name="Sun H."/>
            <person name="Tallon L.J."/>
            <person name="Tambunga G."/>
            <person name="Toriumi M.J."/>
            <person name="Town C.D."/>
            <person name="Utterback T."/>
            <person name="Van Aken S."/>
            <person name="Vaysberg M."/>
            <person name="Vysotskaia V.S."/>
            <person name="Walker M."/>
            <person name="Wu D."/>
            <person name="Yu G."/>
            <person name="Fraser C.M."/>
            <person name="Venter J.C."/>
            <person name="Davis R.W."/>
        </authorList>
    </citation>
    <scope>NUCLEOTIDE SEQUENCE [LARGE SCALE GENOMIC DNA]</scope>
    <source>
        <strain>cv. Columbia</strain>
    </source>
</reference>
<reference key="3">
    <citation type="journal article" date="2017" name="Plant J.">
        <title>Araport11: a complete reannotation of the Arabidopsis thaliana reference genome.</title>
        <authorList>
            <person name="Cheng C.Y."/>
            <person name="Krishnakumar V."/>
            <person name="Chan A.P."/>
            <person name="Thibaud-Nissen F."/>
            <person name="Schobel S."/>
            <person name="Town C.D."/>
        </authorList>
    </citation>
    <scope>GENOME REANNOTATION</scope>
    <source>
        <strain>cv. Columbia</strain>
    </source>
</reference>
<reference key="4">
    <citation type="journal article" date="2010" name="Plant Cell">
        <title>The RAD23 family provides an essential connection between the 26S proteasome and ubiquitylated proteins in Arabidopsis.</title>
        <authorList>
            <person name="Farmer L.M."/>
            <person name="Book A.J."/>
            <person name="Lee K.H."/>
            <person name="Lin Y.L."/>
            <person name="Fu H."/>
            <person name="Vierstra R.D."/>
        </authorList>
    </citation>
    <scope>GENE FAMILY</scope>
    <scope>TISSUE SPECIFICITY</scope>
    <scope>SUBCELLULAR LOCATION</scope>
</reference>
<reference key="5">
    <citation type="journal article" date="2010" name="Trends Plant Sci.">
        <title>Proteasomal recognition of ubiquitylated substrates.</title>
        <authorList>
            <person name="Fu H."/>
            <person name="Lin Y.L."/>
            <person name="Fatimababy A.S."/>
        </authorList>
    </citation>
    <scope>REVIEW</scope>
</reference>
<reference key="6">
    <citation type="journal article" date="2017" name="Genes (Basel)">
        <title>RAD4 and RAD23/HMR contribute to Arabidopsis UV tolerance.</title>
        <authorList>
            <person name="Lahari T."/>
            <person name="Lazaro J."/>
            <person name="Schroeder D.F."/>
        </authorList>
    </citation>
    <scope>FUNCTION</scope>
    <scope>DISRUPTION PHENOTYPE</scope>
    <source>
        <strain>cv. Columbia</strain>
    </source>
</reference>